<protein>
    <recommendedName>
        <fullName evidence="1">2,3-bisphosphoglycerate-dependent phosphoglycerate mutase</fullName>
        <shortName evidence="1">BPG-dependent PGAM</shortName>
        <shortName evidence="1">PGAM</shortName>
        <shortName evidence="1">Phosphoglyceromutase</shortName>
        <shortName evidence="1">dPGM</shortName>
        <ecNumber evidence="1">5.4.2.11</ecNumber>
    </recommendedName>
</protein>
<accession>A3MQ23</accession>
<name>GPMA_BURM7</name>
<reference key="1">
    <citation type="journal article" date="2010" name="Genome Biol. Evol.">
        <title>Continuing evolution of Burkholderia mallei through genome reduction and large-scale rearrangements.</title>
        <authorList>
            <person name="Losada L."/>
            <person name="Ronning C.M."/>
            <person name="DeShazer D."/>
            <person name="Woods D."/>
            <person name="Fedorova N."/>
            <person name="Kim H.S."/>
            <person name="Shabalina S.A."/>
            <person name="Pearson T.R."/>
            <person name="Brinkac L."/>
            <person name="Tan P."/>
            <person name="Nandi T."/>
            <person name="Crabtree J."/>
            <person name="Badger J."/>
            <person name="Beckstrom-Sternberg S."/>
            <person name="Saqib M."/>
            <person name="Schutzer S.E."/>
            <person name="Keim P."/>
            <person name="Nierman W.C."/>
        </authorList>
    </citation>
    <scope>NUCLEOTIDE SEQUENCE [LARGE SCALE GENOMIC DNA]</scope>
    <source>
        <strain>NCTC 10247</strain>
    </source>
</reference>
<feature type="chain" id="PRO_1000064039" description="2,3-bisphosphoglycerate-dependent phosphoglycerate mutase">
    <location>
        <begin position="1"/>
        <end position="249"/>
    </location>
</feature>
<feature type="active site" description="Tele-phosphohistidine intermediate" evidence="1">
    <location>
        <position position="9"/>
    </location>
</feature>
<feature type="active site" description="Proton donor/acceptor" evidence="1">
    <location>
        <position position="87"/>
    </location>
</feature>
<feature type="binding site" evidence="1">
    <location>
        <begin position="8"/>
        <end position="15"/>
    </location>
    <ligand>
        <name>substrate</name>
    </ligand>
</feature>
<feature type="binding site" evidence="1">
    <location>
        <begin position="21"/>
        <end position="22"/>
    </location>
    <ligand>
        <name>substrate</name>
    </ligand>
</feature>
<feature type="binding site" evidence="1">
    <location>
        <position position="60"/>
    </location>
    <ligand>
        <name>substrate</name>
    </ligand>
</feature>
<feature type="binding site" evidence="1">
    <location>
        <begin position="87"/>
        <end position="90"/>
    </location>
    <ligand>
        <name>substrate</name>
    </ligand>
</feature>
<feature type="binding site" evidence="1">
    <location>
        <position position="98"/>
    </location>
    <ligand>
        <name>substrate</name>
    </ligand>
</feature>
<feature type="binding site" evidence="1">
    <location>
        <begin position="114"/>
        <end position="115"/>
    </location>
    <ligand>
        <name>substrate</name>
    </ligand>
</feature>
<feature type="binding site" evidence="1">
    <location>
        <begin position="183"/>
        <end position="184"/>
    </location>
    <ligand>
        <name>substrate</name>
    </ligand>
</feature>
<feature type="site" description="Transition state stabilizer" evidence="1">
    <location>
        <position position="182"/>
    </location>
</feature>
<dbReference type="EC" id="5.4.2.11" evidence="1"/>
<dbReference type="EMBL" id="CP000548">
    <property type="protein sequence ID" value="ABO06642.1"/>
    <property type="molecule type" value="Genomic_DNA"/>
</dbReference>
<dbReference type="RefSeq" id="WP_004198007.1">
    <property type="nucleotide sequence ID" value="NZ_CP007802.1"/>
</dbReference>
<dbReference type="SMR" id="A3MQ23"/>
<dbReference type="GeneID" id="93058961"/>
<dbReference type="KEGG" id="bmaz:BM44_499"/>
<dbReference type="KEGG" id="bmn:BMA10247_2838"/>
<dbReference type="PATRIC" id="fig|320389.8.peg.548"/>
<dbReference type="UniPathway" id="UPA00109">
    <property type="reaction ID" value="UER00186"/>
</dbReference>
<dbReference type="GO" id="GO:0004619">
    <property type="term" value="F:phosphoglycerate mutase activity"/>
    <property type="evidence" value="ECO:0007669"/>
    <property type="project" value="UniProtKB-EC"/>
</dbReference>
<dbReference type="GO" id="GO:0006094">
    <property type="term" value="P:gluconeogenesis"/>
    <property type="evidence" value="ECO:0007669"/>
    <property type="project" value="UniProtKB-UniRule"/>
</dbReference>
<dbReference type="GO" id="GO:0006096">
    <property type="term" value="P:glycolytic process"/>
    <property type="evidence" value="ECO:0007669"/>
    <property type="project" value="UniProtKB-UniRule"/>
</dbReference>
<dbReference type="CDD" id="cd07067">
    <property type="entry name" value="HP_PGM_like"/>
    <property type="match status" value="1"/>
</dbReference>
<dbReference type="FunFam" id="3.40.50.1240:FF:000003">
    <property type="entry name" value="2,3-bisphosphoglycerate-dependent phosphoglycerate mutase"/>
    <property type="match status" value="1"/>
</dbReference>
<dbReference type="Gene3D" id="3.40.50.1240">
    <property type="entry name" value="Phosphoglycerate mutase-like"/>
    <property type="match status" value="1"/>
</dbReference>
<dbReference type="HAMAP" id="MF_01039">
    <property type="entry name" value="PGAM_GpmA"/>
    <property type="match status" value="1"/>
</dbReference>
<dbReference type="InterPro" id="IPR013078">
    <property type="entry name" value="His_Pase_superF_clade-1"/>
</dbReference>
<dbReference type="InterPro" id="IPR029033">
    <property type="entry name" value="His_PPase_superfam"/>
</dbReference>
<dbReference type="InterPro" id="IPR001345">
    <property type="entry name" value="PG/BPGM_mutase_AS"/>
</dbReference>
<dbReference type="InterPro" id="IPR005952">
    <property type="entry name" value="Phosphogly_mut1"/>
</dbReference>
<dbReference type="NCBIfam" id="TIGR01258">
    <property type="entry name" value="pgm_1"/>
    <property type="match status" value="1"/>
</dbReference>
<dbReference type="NCBIfam" id="NF010713">
    <property type="entry name" value="PRK14115.1"/>
    <property type="match status" value="1"/>
</dbReference>
<dbReference type="PANTHER" id="PTHR11931">
    <property type="entry name" value="PHOSPHOGLYCERATE MUTASE"/>
    <property type="match status" value="1"/>
</dbReference>
<dbReference type="Pfam" id="PF00300">
    <property type="entry name" value="His_Phos_1"/>
    <property type="match status" value="2"/>
</dbReference>
<dbReference type="PIRSF" id="PIRSF000709">
    <property type="entry name" value="6PFK_2-Ptase"/>
    <property type="match status" value="1"/>
</dbReference>
<dbReference type="SMART" id="SM00855">
    <property type="entry name" value="PGAM"/>
    <property type="match status" value="1"/>
</dbReference>
<dbReference type="SUPFAM" id="SSF53254">
    <property type="entry name" value="Phosphoglycerate mutase-like"/>
    <property type="match status" value="1"/>
</dbReference>
<dbReference type="PROSITE" id="PS00175">
    <property type="entry name" value="PG_MUTASE"/>
    <property type="match status" value="1"/>
</dbReference>
<gene>
    <name evidence="1" type="primary">gpmA</name>
    <name type="ordered locus">BMA10247_2838</name>
</gene>
<organism>
    <name type="scientific">Burkholderia mallei (strain NCTC 10247)</name>
    <dbReference type="NCBI Taxonomy" id="320389"/>
    <lineage>
        <taxon>Bacteria</taxon>
        <taxon>Pseudomonadati</taxon>
        <taxon>Pseudomonadota</taxon>
        <taxon>Betaproteobacteria</taxon>
        <taxon>Burkholderiales</taxon>
        <taxon>Burkholderiaceae</taxon>
        <taxon>Burkholderia</taxon>
        <taxon>pseudomallei group</taxon>
    </lineage>
</organism>
<evidence type="ECO:0000255" key="1">
    <source>
        <dbReference type="HAMAP-Rule" id="MF_01039"/>
    </source>
</evidence>
<sequence length="249" mass="27893">MYKLVLIRHGESTWNKENRFTGWVDVDLTEQGNREARQAGQLLKEAGYTFDIAYTSVLKRAIRTLWHVQDQMDLMYVPVVHSWRLNERHYGALSGLNKAETAAKYGDEQVLVWRRSYDTPPPALEPGDERAPYADPRYAKVPREQLPLTECLKDTVARVLPLWNESIAPAVKAGKQVLIAAHGNSLRALIKYLDGISDADIVGLNIPNGVPLVYELDESLTPIRHYYLGDQEAIAKAQAAVAQQGKSAA</sequence>
<proteinExistence type="inferred from homology"/>
<comment type="function">
    <text evidence="1">Catalyzes the interconversion of 2-phosphoglycerate and 3-phosphoglycerate.</text>
</comment>
<comment type="catalytic activity">
    <reaction evidence="1">
        <text>(2R)-2-phosphoglycerate = (2R)-3-phosphoglycerate</text>
        <dbReference type="Rhea" id="RHEA:15901"/>
        <dbReference type="ChEBI" id="CHEBI:58272"/>
        <dbReference type="ChEBI" id="CHEBI:58289"/>
        <dbReference type="EC" id="5.4.2.11"/>
    </reaction>
</comment>
<comment type="pathway">
    <text evidence="1">Carbohydrate degradation; glycolysis; pyruvate from D-glyceraldehyde 3-phosphate: step 3/5.</text>
</comment>
<comment type="subunit">
    <text evidence="1">Homodimer.</text>
</comment>
<comment type="similarity">
    <text evidence="1">Belongs to the phosphoglycerate mutase family. BPG-dependent PGAM subfamily.</text>
</comment>
<keyword id="KW-0312">Gluconeogenesis</keyword>
<keyword id="KW-0324">Glycolysis</keyword>
<keyword id="KW-0413">Isomerase</keyword>